<organism>
    <name type="scientific">Homo sapiens</name>
    <name type="common">Human</name>
    <dbReference type="NCBI Taxonomy" id="9606"/>
    <lineage>
        <taxon>Eukaryota</taxon>
        <taxon>Metazoa</taxon>
        <taxon>Chordata</taxon>
        <taxon>Craniata</taxon>
        <taxon>Vertebrata</taxon>
        <taxon>Euteleostomi</taxon>
        <taxon>Mammalia</taxon>
        <taxon>Eutheria</taxon>
        <taxon>Euarchontoglires</taxon>
        <taxon>Primates</taxon>
        <taxon>Haplorrhini</taxon>
        <taxon>Catarrhini</taxon>
        <taxon>Hominidae</taxon>
        <taxon>Homo</taxon>
    </lineage>
</organism>
<accession>O75346</accession>
<accession>A4FVA7</accession>
<accession>Q0P6G3</accession>
<accession>Q6P0L2</accession>
<accession>Q8NCA3</accession>
<accession>Q8NCF9</accession>
<sequence>MGPLQFRDVAIEFSLEEWHCLDTAQRNLYRDVMLENYRNLVFLGIVVSKPDLVTCLEQGKKPLTMERHEMIAKPPVMSSHFAQDLWPENIQNSFQIGMLRRYEECRHDNLQLKKGCKSVGEHKVHKGGYNGLNQCLTTTQKEIFQCDKYGKVFHKFSNSNTYKTRHTGINLFKCIICGKAFKRSSTLTTHKKIHTGEKPYRCEECGKAFNQSANLTTHKRIHTGEKPYRCEECGKAFKQSSNLTTHKKIHTGEKPYKCEECGKAFNRSTDLTTHKIVHTGEKPYKCEECGKAFKHPSHVTTHKKIHTRGKPYNCEECGKSFKHCSNLTIHKRIHTGEKPYKCEECGKAFHLSSHLTTHKILHTGEKPYRCRECGKAFNHSTTLFSHEKIHTGEKPYKCDECGKTFTWPSILSKHKRTHTGEKPYKCEECGKSFTASSTLTTHKRIHTGEKPYKCEECGKAFNWSSDLNKHKKIHIERKPYIVKNVTDLLNVPPLLISIR</sequence>
<feature type="chain" id="PRO_0000047486" description="Zinc finger protein 253">
    <location>
        <begin position="1"/>
        <end position="499"/>
    </location>
</feature>
<feature type="domain" description="KRAB" evidence="2">
    <location>
        <begin position="4"/>
        <end position="75"/>
    </location>
</feature>
<feature type="zinc finger region" description="C2H2-type 1" evidence="1">
    <location>
        <begin position="172"/>
        <end position="194"/>
    </location>
</feature>
<feature type="zinc finger region" description="C2H2-type 2" evidence="1">
    <location>
        <begin position="200"/>
        <end position="222"/>
    </location>
</feature>
<feature type="zinc finger region" description="C2H2-type 3" evidence="1">
    <location>
        <begin position="228"/>
        <end position="250"/>
    </location>
</feature>
<feature type="zinc finger region" description="C2H2-type 4" evidence="1">
    <location>
        <begin position="256"/>
        <end position="278"/>
    </location>
</feature>
<feature type="zinc finger region" description="C2H2-type 5" evidence="1">
    <location>
        <begin position="284"/>
        <end position="306"/>
    </location>
</feature>
<feature type="zinc finger region" description="C2H2-type 6" evidence="1">
    <location>
        <begin position="312"/>
        <end position="334"/>
    </location>
</feature>
<feature type="zinc finger region" description="C2H2-type 7" evidence="1">
    <location>
        <begin position="340"/>
        <end position="362"/>
    </location>
</feature>
<feature type="zinc finger region" description="C2H2-type 8" evidence="1">
    <location>
        <begin position="368"/>
        <end position="390"/>
    </location>
</feature>
<feature type="zinc finger region" description="C2H2-type 9" evidence="1">
    <location>
        <begin position="396"/>
        <end position="418"/>
    </location>
</feature>
<feature type="zinc finger region" description="C2H2-type 10" evidence="1">
    <location>
        <begin position="424"/>
        <end position="446"/>
    </location>
</feature>
<feature type="zinc finger region" description="C2H2-type 11" evidence="1">
    <location>
        <begin position="452"/>
        <end position="474"/>
    </location>
</feature>
<feature type="splice variant" id="VSP_036962" description="In isoform 2." evidence="3">
    <location>
        <begin position="1"/>
        <end position="76"/>
    </location>
</feature>
<feature type="sequence conflict" description="In Ref. 1; AAC26844." evidence="4" ref="1">
    <location>
        <begin position="220"/>
        <end position="443"/>
    </location>
</feature>
<feature type="sequence conflict" description="In Ref. 2; BAC11185." evidence="4" ref="2">
    <location>
        <begin position="286"/>
        <end position="313"/>
    </location>
</feature>
<feature type="sequence conflict" description="In Ref. 2; BAC11185." evidence="4" ref="2">
    <original>R</original>
    <variation>I</variation>
    <location>
        <position position="371"/>
    </location>
</feature>
<reference key="1">
    <citation type="journal article" date="1999" name="J. Biol. Chem.">
        <title>Molecular cloning of six novel Kruppel-like zinc finger genes from hematopoietic cells and identification of a novel transregulatory domain KRNB.</title>
        <authorList>
            <person name="Han Z.-G."/>
            <person name="Zhang Q.-H."/>
            <person name="Ye M."/>
            <person name="Kan L.-X."/>
            <person name="Gu B.-W."/>
            <person name="He K.-L."/>
            <person name="Shi S.-L."/>
            <person name="Zhou J."/>
            <person name="Fu G."/>
            <person name="Mao M."/>
            <person name="Chen S.-J."/>
            <person name="Yu L."/>
            <person name="Chen Z."/>
        </authorList>
    </citation>
    <scope>NUCLEOTIDE SEQUENCE [MRNA] (ISOFORM 1)</scope>
    <source>
        <tissue>Bone marrow</tissue>
    </source>
</reference>
<reference key="2">
    <citation type="journal article" date="2004" name="Nat. Genet.">
        <title>Complete sequencing and characterization of 21,243 full-length human cDNAs.</title>
        <authorList>
            <person name="Ota T."/>
            <person name="Suzuki Y."/>
            <person name="Nishikawa T."/>
            <person name="Otsuki T."/>
            <person name="Sugiyama T."/>
            <person name="Irie R."/>
            <person name="Wakamatsu A."/>
            <person name="Hayashi K."/>
            <person name="Sato H."/>
            <person name="Nagai K."/>
            <person name="Kimura K."/>
            <person name="Makita H."/>
            <person name="Sekine M."/>
            <person name="Obayashi M."/>
            <person name="Nishi T."/>
            <person name="Shibahara T."/>
            <person name="Tanaka T."/>
            <person name="Ishii S."/>
            <person name="Yamamoto J."/>
            <person name="Saito K."/>
            <person name="Kawai Y."/>
            <person name="Isono Y."/>
            <person name="Nakamura Y."/>
            <person name="Nagahari K."/>
            <person name="Murakami K."/>
            <person name="Yasuda T."/>
            <person name="Iwayanagi T."/>
            <person name="Wagatsuma M."/>
            <person name="Shiratori A."/>
            <person name="Sudo H."/>
            <person name="Hosoiri T."/>
            <person name="Kaku Y."/>
            <person name="Kodaira H."/>
            <person name="Kondo H."/>
            <person name="Sugawara M."/>
            <person name="Takahashi M."/>
            <person name="Kanda K."/>
            <person name="Yokoi T."/>
            <person name="Furuya T."/>
            <person name="Kikkawa E."/>
            <person name="Omura Y."/>
            <person name="Abe K."/>
            <person name="Kamihara K."/>
            <person name="Katsuta N."/>
            <person name="Sato K."/>
            <person name="Tanikawa M."/>
            <person name="Yamazaki M."/>
            <person name="Ninomiya K."/>
            <person name="Ishibashi T."/>
            <person name="Yamashita H."/>
            <person name="Murakawa K."/>
            <person name="Fujimori K."/>
            <person name="Tanai H."/>
            <person name="Kimata M."/>
            <person name="Watanabe M."/>
            <person name="Hiraoka S."/>
            <person name="Chiba Y."/>
            <person name="Ishida S."/>
            <person name="Ono Y."/>
            <person name="Takiguchi S."/>
            <person name="Watanabe S."/>
            <person name="Yosida M."/>
            <person name="Hotuta T."/>
            <person name="Kusano J."/>
            <person name="Kanehori K."/>
            <person name="Takahashi-Fujii A."/>
            <person name="Hara H."/>
            <person name="Tanase T.-O."/>
            <person name="Nomura Y."/>
            <person name="Togiya S."/>
            <person name="Komai F."/>
            <person name="Hara R."/>
            <person name="Takeuchi K."/>
            <person name="Arita M."/>
            <person name="Imose N."/>
            <person name="Musashino K."/>
            <person name="Yuuki H."/>
            <person name="Oshima A."/>
            <person name="Sasaki N."/>
            <person name="Aotsuka S."/>
            <person name="Yoshikawa Y."/>
            <person name="Matsunawa H."/>
            <person name="Ichihara T."/>
            <person name="Shiohata N."/>
            <person name="Sano S."/>
            <person name="Moriya S."/>
            <person name="Momiyama H."/>
            <person name="Satoh N."/>
            <person name="Takami S."/>
            <person name="Terashima Y."/>
            <person name="Suzuki O."/>
            <person name="Nakagawa S."/>
            <person name="Senoh A."/>
            <person name="Mizoguchi H."/>
            <person name="Goto Y."/>
            <person name="Shimizu F."/>
            <person name="Wakebe H."/>
            <person name="Hishigaki H."/>
            <person name="Watanabe T."/>
            <person name="Sugiyama A."/>
            <person name="Takemoto M."/>
            <person name="Kawakami B."/>
            <person name="Yamazaki M."/>
            <person name="Watanabe K."/>
            <person name="Kumagai A."/>
            <person name="Itakura S."/>
            <person name="Fukuzumi Y."/>
            <person name="Fujimori Y."/>
            <person name="Komiyama M."/>
            <person name="Tashiro H."/>
            <person name="Tanigami A."/>
            <person name="Fujiwara T."/>
            <person name="Ono T."/>
            <person name="Yamada K."/>
            <person name="Fujii Y."/>
            <person name="Ozaki K."/>
            <person name="Hirao M."/>
            <person name="Ohmori Y."/>
            <person name="Kawabata A."/>
            <person name="Hikiji T."/>
            <person name="Kobatake N."/>
            <person name="Inagaki H."/>
            <person name="Ikema Y."/>
            <person name="Okamoto S."/>
            <person name="Okitani R."/>
            <person name="Kawakami T."/>
            <person name="Noguchi S."/>
            <person name="Itoh T."/>
            <person name="Shigeta K."/>
            <person name="Senba T."/>
            <person name="Matsumura K."/>
            <person name="Nakajima Y."/>
            <person name="Mizuno T."/>
            <person name="Morinaga M."/>
            <person name="Sasaki M."/>
            <person name="Togashi T."/>
            <person name="Oyama M."/>
            <person name="Hata H."/>
            <person name="Watanabe M."/>
            <person name="Komatsu T."/>
            <person name="Mizushima-Sugano J."/>
            <person name="Satoh T."/>
            <person name="Shirai Y."/>
            <person name="Takahashi Y."/>
            <person name="Nakagawa K."/>
            <person name="Okumura K."/>
            <person name="Nagase T."/>
            <person name="Nomura N."/>
            <person name="Kikuchi H."/>
            <person name="Masuho Y."/>
            <person name="Yamashita R."/>
            <person name="Nakai K."/>
            <person name="Yada T."/>
            <person name="Nakamura Y."/>
            <person name="Ohara O."/>
            <person name="Isogai T."/>
            <person name="Sugano S."/>
        </authorList>
    </citation>
    <scope>NUCLEOTIDE SEQUENCE [LARGE SCALE MRNA] (ISOFORM 1)</scope>
</reference>
<reference key="3">
    <citation type="journal article" date="2004" name="Nature">
        <title>The DNA sequence and biology of human chromosome 19.</title>
        <authorList>
            <person name="Grimwood J."/>
            <person name="Gordon L.A."/>
            <person name="Olsen A.S."/>
            <person name="Terry A."/>
            <person name="Schmutz J."/>
            <person name="Lamerdin J.E."/>
            <person name="Hellsten U."/>
            <person name="Goodstein D."/>
            <person name="Couronne O."/>
            <person name="Tran-Gyamfi M."/>
            <person name="Aerts A."/>
            <person name="Altherr M."/>
            <person name="Ashworth L."/>
            <person name="Bajorek E."/>
            <person name="Black S."/>
            <person name="Branscomb E."/>
            <person name="Caenepeel S."/>
            <person name="Carrano A.V."/>
            <person name="Caoile C."/>
            <person name="Chan Y.M."/>
            <person name="Christensen M."/>
            <person name="Cleland C.A."/>
            <person name="Copeland A."/>
            <person name="Dalin E."/>
            <person name="Dehal P."/>
            <person name="Denys M."/>
            <person name="Detter J.C."/>
            <person name="Escobar J."/>
            <person name="Flowers D."/>
            <person name="Fotopulos D."/>
            <person name="Garcia C."/>
            <person name="Georgescu A.M."/>
            <person name="Glavina T."/>
            <person name="Gomez M."/>
            <person name="Gonzales E."/>
            <person name="Groza M."/>
            <person name="Hammon N."/>
            <person name="Hawkins T."/>
            <person name="Haydu L."/>
            <person name="Ho I."/>
            <person name="Huang W."/>
            <person name="Israni S."/>
            <person name="Jett J."/>
            <person name="Kadner K."/>
            <person name="Kimball H."/>
            <person name="Kobayashi A."/>
            <person name="Larionov V."/>
            <person name="Leem S.-H."/>
            <person name="Lopez F."/>
            <person name="Lou Y."/>
            <person name="Lowry S."/>
            <person name="Malfatti S."/>
            <person name="Martinez D."/>
            <person name="McCready P.M."/>
            <person name="Medina C."/>
            <person name="Morgan J."/>
            <person name="Nelson K."/>
            <person name="Nolan M."/>
            <person name="Ovcharenko I."/>
            <person name="Pitluck S."/>
            <person name="Pollard M."/>
            <person name="Popkie A.P."/>
            <person name="Predki P."/>
            <person name="Quan G."/>
            <person name="Ramirez L."/>
            <person name="Rash S."/>
            <person name="Retterer J."/>
            <person name="Rodriguez A."/>
            <person name="Rogers S."/>
            <person name="Salamov A."/>
            <person name="Salazar A."/>
            <person name="She X."/>
            <person name="Smith D."/>
            <person name="Slezak T."/>
            <person name="Solovyev V."/>
            <person name="Thayer N."/>
            <person name="Tice H."/>
            <person name="Tsai M."/>
            <person name="Ustaszewska A."/>
            <person name="Vo N."/>
            <person name="Wagner M."/>
            <person name="Wheeler J."/>
            <person name="Wu K."/>
            <person name="Xie G."/>
            <person name="Yang J."/>
            <person name="Dubchak I."/>
            <person name="Furey T.S."/>
            <person name="DeJong P."/>
            <person name="Dickson M."/>
            <person name="Gordon D."/>
            <person name="Eichler E.E."/>
            <person name="Pennacchio L.A."/>
            <person name="Richardson P."/>
            <person name="Stubbs L."/>
            <person name="Rokhsar D.S."/>
            <person name="Myers R.M."/>
            <person name="Rubin E.M."/>
            <person name="Lucas S.M."/>
        </authorList>
    </citation>
    <scope>NUCLEOTIDE SEQUENCE [LARGE SCALE GENOMIC DNA]</scope>
</reference>
<reference key="4">
    <citation type="journal article" date="2004" name="Genome Res.">
        <title>The status, quality, and expansion of the NIH full-length cDNA project: the Mammalian Gene Collection (MGC).</title>
        <authorList>
            <consortium name="The MGC Project Team"/>
        </authorList>
    </citation>
    <scope>NUCLEOTIDE SEQUENCE [LARGE SCALE MRNA] (ISOFORMS 1 AND 2)</scope>
    <source>
        <tissue>Eye</tissue>
    </source>
</reference>
<proteinExistence type="evidence at protein level"/>
<dbReference type="EMBL" id="AF038951">
    <property type="protein sequence ID" value="AAC26844.1"/>
    <property type="molecule type" value="mRNA"/>
</dbReference>
<dbReference type="EMBL" id="AK074757">
    <property type="protein sequence ID" value="BAC11185.1"/>
    <property type="molecule type" value="mRNA"/>
</dbReference>
<dbReference type="EMBL" id="AK074872">
    <property type="protein sequence ID" value="BAC11257.1"/>
    <property type="status" value="ALT_INIT"/>
    <property type="molecule type" value="mRNA"/>
</dbReference>
<dbReference type="EMBL" id="AC011477">
    <property type="status" value="NOT_ANNOTATED_CDS"/>
    <property type="molecule type" value="Genomic_DNA"/>
</dbReference>
<dbReference type="EMBL" id="BC014148">
    <property type="protein sequence ID" value="AAH14148.2"/>
    <property type="status" value="ALT_INIT"/>
    <property type="molecule type" value="mRNA"/>
</dbReference>
<dbReference type="EMBL" id="BC065572">
    <property type="protein sequence ID" value="AAH65572.1"/>
    <property type="molecule type" value="mRNA"/>
</dbReference>
<dbReference type="EMBL" id="BC125063">
    <property type="protein sequence ID" value="AAI25064.1"/>
    <property type="molecule type" value="mRNA"/>
</dbReference>
<dbReference type="EMBL" id="BC125064">
    <property type="protein sequence ID" value="AAI25065.1"/>
    <property type="molecule type" value="mRNA"/>
</dbReference>
<dbReference type="CCDS" id="CCDS42532.1">
    <molecule id="O75346-1"/>
</dbReference>
<dbReference type="CCDS" id="CCDS86729.1">
    <molecule id="O75346-2"/>
</dbReference>
<dbReference type="RefSeq" id="NP_001318062.1">
    <property type="nucleotide sequence ID" value="NM_001331133.1"/>
</dbReference>
<dbReference type="RefSeq" id="NP_001318063.1">
    <molecule id="O75346-2"/>
    <property type="nucleotide sequence ID" value="NM_001331134.1"/>
</dbReference>
<dbReference type="RefSeq" id="NP_066385.2">
    <molecule id="O75346-1"/>
    <property type="nucleotide sequence ID" value="NM_021047.3"/>
</dbReference>
<dbReference type="SMR" id="O75346"/>
<dbReference type="BioGRID" id="121110">
    <property type="interactions" value="6"/>
</dbReference>
<dbReference type="FunCoup" id="O75346">
    <property type="interactions" value="13"/>
</dbReference>
<dbReference type="IntAct" id="O75346">
    <property type="interactions" value="8"/>
</dbReference>
<dbReference type="MINT" id="O75346"/>
<dbReference type="STRING" id="9606.ENSP00000468720"/>
<dbReference type="GlyGen" id="O75346">
    <property type="glycosylation" value="3 sites, 1 O-linked glycan (3 sites)"/>
</dbReference>
<dbReference type="iPTMnet" id="O75346"/>
<dbReference type="PhosphoSitePlus" id="O75346"/>
<dbReference type="BioMuta" id="ZNF253"/>
<dbReference type="jPOST" id="O75346"/>
<dbReference type="MassIVE" id="O75346"/>
<dbReference type="PaxDb" id="9606-ENSP00000468720"/>
<dbReference type="PeptideAtlas" id="O75346"/>
<dbReference type="ProteomicsDB" id="49914">
    <molecule id="O75346-1"/>
</dbReference>
<dbReference type="ProteomicsDB" id="49915">
    <molecule id="O75346-2"/>
</dbReference>
<dbReference type="Antibodypedia" id="56721">
    <property type="antibodies" value="41 antibodies from 17 providers"/>
</dbReference>
<dbReference type="DNASU" id="56242"/>
<dbReference type="Ensembl" id="ENST00000355650.4">
    <molecule id="O75346-2"/>
    <property type="protein sequence ID" value="ENSP00000347868.4"/>
    <property type="gene ID" value="ENSG00000256771.5"/>
</dbReference>
<dbReference type="Ensembl" id="ENST00000589717.2">
    <molecule id="O75346-1"/>
    <property type="protein sequence ID" value="ENSP00000468720.1"/>
    <property type="gene ID" value="ENSG00000256771.5"/>
</dbReference>
<dbReference type="GeneID" id="56242"/>
<dbReference type="KEGG" id="hsa:56242"/>
<dbReference type="MANE-Select" id="ENST00000589717.2">
    <property type="protein sequence ID" value="ENSP00000468720.1"/>
    <property type="RefSeq nucleotide sequence ID" value="NM_021047.3"/>
    <property type="RefSeq protein sequence ID" value="NP_066385.2"/>
</dbReference>
<dbReference type="UCSC" id="uc002noj.4">
    <molecule id="O75346-1"/>
    <property type="organism name" value="human"/>
</dbReference>
<dbReference type="AGR" id="HGNC:13497"/>
<dbReference type="CTD" id="56242"/>
<dbReference type="DisGeNET" id="56242"/>
<dbReference type="GeneCards" id="ZNF253"/>
<dbReference type="HGNC" id="HGNC:13497">
    <property type="gene designation" value="ZNF253"/>
</dbReference>
<dbReference type="HPA" id="ENSG00000256771">
    <property type="expression patterns" value="Low tissue specificity"/>
</dbReference>
<dbReference type="MIM" id="606954">
    <property type="type" value="gene"/>
</dbReference>
<dbReference type="neXtProt" id="NX_O75346"/>
<dbReference type="OpenTargets" id="ENSG00000256771"/>
<dbReference type="PharmGKB" id="PA37785"/>
<dbReference type="VEuPathDB" id="HostDB:ENSG00000256771"/>
<dbReference type="eggNOG" id="KOG1721">
    <property type="taxonomic scope" value="Eukaryota"/>
</dbReference>
<dbReference type="GeneTree" id="ENSGT01130000278311"/>
<dbReference type="HOGENOM" id="CLU_002678_44_0_1"/>
<dbReference type="InParanoid" id="O75346"/>
<dbReference type="OMA" id="HQGIRFK"/>
<dbReference type="OrthoDB" id="40579at2759"/>
<dbReference type="PAN-GO" id="O75346">
    <property type="GO annotations" value="3 GO annotations based on evolutionary models"/>
</dbReference>
<dbReference type="PhylomeDB" id="O75346"/>
<dbReference type="PathwayCommons" id="O75346"/>
<dbReference type="Reactome" id="R-HSA-212436">
    <property type="pathway name" value="Generic Transcription Pathway"/>
</dbReference>
<dbReference type="SignaLink" id="O75346"/>
<dbReference type="BioGRID-ORCS" id="56242">
    <property type="hits" value="272 hits in 1100 CRISPR screens"/>
</dbReference>
<dbReference type="GenomeRNAi" id="56242"/>
<dbReference type="Pharos" id="O75346">
    <property type="development level" value="Tdark"/>
</dbReference>
<dbReference type="PRO" id="PR:O75346"/>
<dbReference type="Proteomes" id="UP000005640">
    <property type="component" value="Chromosome 19"/>
</dbReference>
<dbReference type="RNAct" id="O75346">
    <property type="molecule type" value="protein"/>
</dbReference>
<dbReference type="Bgee" id="ENSG00000256771">
    <property type="expression patterns" value="Expressed in buccal mucosa cell and 150 other cell types or tissues"/>
</dbReference>
<dbReference type="ExpressionAtlas" id="O75346">
    <property type="expression patterns" value="baseline and differential"/>
</dbReference>
<dbReference type="GO" id="GO:0005634">
    <property type="term" value="C:nucleus"/>
    <property type="evidence" value="ECO:0007669"/>
    <property type="project" value="UniProtKB-SubCell"/>
</dbReference>
<dbReference type="GO" id="GO:0000981">
    <property type="term" value="F:DNA-binding transcription factor activity, RNA polymerase II-specific"/>
    <property type="evidence" value="ECO:0000318"/>
    <property type="project" value="GO_Central"/>
</dbReference>
<dbReference type="GO" id="GO:0000978">
    <property type="term" value="F:RNA polymerase II cis-regulatory region sequence-specific DNA binding"/>
    <property type="evidence" value="ECO:0000318"/>
    <property type="project" value="GO_Central"/>
</dbReference>
<dbReference type="GO" id="GO:0008270">
    <property type="term" value="F:zinc ion binding"/>
    <property type="evidence" value="ECO:0007669"/>
    <property type="project" value="UniProtKB-KW"/>
</dbReference>
<dbReference type="GO" id="GO:0045892">
    <property type="term" value="P:negative regulation of DNA-templated transcription"/>
    <property type="evidence" value="ECO:0000303"/>
    <property type="project" value="UniProtKB"/>
</dbReference>
<dbReference type="GO" id="GO:0006355">
    <property type="term" value="P:regulation of DNA-templated transcription"/>
    <property type="evidence" value="ECO:0000318"/>
    <property type="project" value="GO_Central"/>
</dbReference>
<dbReference type="CDD" id="cd07765">
    <property type="entry name" value="KRAB_A-box"/>
    <property type="match status" value="1"/>
</dbReference>
<dbReference type="FunFam" id="3.30.160.60:FF:000688">
    <property type="entry name" value="zinc finger protein 197 isoform X1"/>
    <property type="match status" value="1"/>
</dbReference>
<dbReference type="FunFam" id="3.30.160.60:FF:000034">
    <property type="entry name" value="zinc finger protein 25"/>
    <property type="match status" value="2"/>
</dbReference>
<dbReference type="FunFam" id="3.30.160.60:FF:002343">
    <property type="entry name" value="Zinc finger protein 33A"/>
    <property type="match status" value="1"/>
</dbReference>
<dbReference type="FunFam" id="3.30.160.60:FF:000087">
    <property type="entry name" value="Zinc finger protein 354B"/>
    <property type="match status" value="1"/>
</dbReference>
<dbReference type="FunFam" id="3.30.160.60:FF:000120">
    <property type="entry name" value="Zinc finger protein 430"/>
    <property type="match status" value="4"/>
</dbReference>
<dbReference type="FunFam" id="3.30.160.60:FF:000281">
    <property type="entry name" value="Zinc finger protein 558 isoform X1"/>
    <property type="match status" value="1"/>
</dbReference>
<dbReference type="FunFam" id="3.30.160.60:FF:000362">
    <property type="entry name" value="Zinc finger protein 606"/>
    <property type="match status" value="1"/>
</dbReference>
<dbReference type="Gene3D" id="6.10.140.140">
    <property type="match status" value="1"/>
</dbReference>
<dbReference type="Gene3D" id="3.30.160.60">
    <property type="entry name" value="Classic Zinc Finger"/>
    <property type="match status" value="11"/>
</dbReference>
<dbReference type="InterPro" id="IPR001909">
    <property type="entry name" value="KRAB"/>
</dbReference>
<dbReference type="InterPro" id="IPR036051">
    <property type="entry name" value="KRAB_dom_sf"/>
</dbReference>
<dbReference type="InterPro" id="IPR036236">
    <property type="entry name" value="Znf_C2H2_sf"/>
</dbReference>
<dbReference type="InterPro" id="IPR013087">
    <property type="entry name" value="Znf_C2H2_type"/>
</dbReference>
<dbReference type="PANTHER" id="PTHR24409">
    <property type="entry name" value="ZINC FINGER PROTEIN 142"/>
    <property type="match status" value="1"/>
</dbReference>
<dbReference type="PANTHER" id="PTHR24409:SF331">
    <property type="entry name" value="ZINC FINGER PROTEIN 322A"/>
    <property type="match status" value="1"/>
</dbReference>
<dbReference type="Pfam" id="PF01352">
    <property type="entry name" value="KRAB"/>
    <property type="match status" value="1"/>
</dbReference>
<dbReference type="Pfam" id="PF00096">
    <property type="entry name" value="zf-C2H2"/>
    <property type="match status" value="9"/>
</dbReference>
<dbReference type="Pfam" id="PF13465">
    <property type="entry name" value="zf-H2C2_2"/>
    <property type="match status" value="1"/>
</dbReference>
<dbReference type="SMART" id="SM00349">
    <property type="entry name" value="KRAB"/>
    <property type="match status" value="1"/>
</dbReference>
<dbReference type="SMART" id="SM00355">
    <property type="entry name" value="ZnF_C2H2"/>
    <property type="match status" value="11"/>
</dbReference>
<dbReference type="SUPFAM" id="SSF57667">
    <property type="entry name" value="beta-beta-alpha zinc fingers"/>
    <property type="match status" value="6"/>
</dbReference>
<dbReference type="SUPFAM" id="SSF109640">
    <property type="entry name" value="KRAB domain (Kruppel-associated box)"/>
    <property type="match status" value="1"/>
</dbReference>
<dbReference type="PROSITE" id="PS50805">
    <property type="entry name" value="KRAB"/>
    <property type="match status" value="1"/>
</dbReference>
<dbReference type="PROSITE" id="PS00028">
    <property type="entry name" value="ZINC_FINGER_C2H2_1"/>
    <property type="match status" value="11"/>
</dbReference>
<dbReference type="PROSITE" id="PS50157">
    <property type="entry name" value="ZINC_FINGER_C2H2_2"/>
    <property type="match status" value="11"/>
</dbReference>
<comment type="function">
    <text>May function as a transcription factor. Seem to have a transcriptional repression activity.</text>
</comment>
<comment type="subcellular location">
    <subcellularLocation>
        <location evidence="4">Nucleus</location>
    </subcellularLocation>
</comment>
<comment type="alternative products">
    <event type="alternative splicing"/>
    <isoform>
        <id>O75346-1</id>
        <name>1</name>
        <sequence type="displayed"/>
    </isoform>
    <isoform>
        <id>O75346-2</id>
        <name>2</name>
        <sequence type="described" ref="VSP_036962"/>
    </isoform>
</comment>
<comment type="tissue specificity">
    <text>Expressed in bone marrow and in monocytic and immature erythroid cell lines.</text>
</comment>
<comment type="similarity">
    <text evidence="4">Belongs to the krueppel C2H2-type zinc-finger protein family.</text>
</comment>
<comment type="sequence caution" evidence="4">
    <conflict type="erroneous initiation">
        <sequence resource="EMBL-CDS" id="AAH14148"/>
    </conflict>
</comment>
<comment type="sequence caution" evidence="4">
    <conflict type="erroneous initiation">
        <sequence resource="EMBL-CDS" id="BAC11257"/>
    </conflict>
</comment>
<gene>
    <name type="primary">ZNF253</name>
    <name type="synonym">BMZF1</name>
    <name type="synonym">ZNF411</name>
</gene>
<keyword id="KW-0025">Alternative splicing</keyword>
<keyword id="KW-0238">DNA-binding</keyword>
<keyword id="KW-0479">Metal-binding</keyword>
<keyword id="KW-0539">Nucleus</keyword>
<keyword id="KW-1267">Proteomics identification</keyword>
<keyword id="KW-1185">Reference proteome</keyword>
<keyword id="KW-0677">Repeat</keyword>
<keyword id="KW-0678">Repressor</keyword>
<keyword id="KW-0804">Transcription</keyword>
<keyword id="KW-0805">Transcription regulation</keyword>
<keyword id="KW-0862">Zinc</keyword>
<keyword id="KW-0863">Zinc-finger</keyword>
<name>ZN253_HUMAN</name>
<evidence type="ECO:0000255" key="1">
    <source>
        <dbReference type="PROSITE-ProRule" id="PRU00042"/>
    </source>
</evidence>
<evidence type="ECO:0000255" key="2">
    <source>
        <dbReference type="PROSITE-ProRule" id="PRU00119"/>
    </source>
</evidence>
<evidence type="ECO:0000303" key="3">
    <source>
    </source>
</evidence>
<evidence type="ECO:0000305" key="4"/>
<protein>
    <recommendedName>
        <fullName>Zinc finger protein 253</fullName>
    </recommendedName>
    <alternativeName>
        <fullName>Bone marrow zinc finger 1</fullName>
        <shortName>BMZF-1</shortName>
    </alternativeName>
    <alternativeName>
        <fullName>Zinc finger protein 411</fullName>
    </alternativeName>
</protein>